<feature type="chain" id="PRO_0000391554" description="CASP-like protein 1U3">
    <location>
        <begin position="1"/>
        <end position="215"/>
    </location>
</feature>
<feature type="topological domain" description="Cytoplasmic" evidence="2">
    <location>
        <begin position="1"/>
        <end position="13"/>
    </location>
</feature>
<feature type="transmembrane region" description="Helical" evidence="2">
    <location>
        <begin position="14"/>
        <end position="34"/>
    </location>
</feature>
<feature type="topological domain" description="Extracellular" evidence="2">
    <location>
        <begin position="35"/>
        <end position="68"/>
    </location>
</feature>
<feature type="transmembrane region" description="Helical" evidence="2">
    <location>
        <begin position="69"/>
        <end position="89"/>
    </location>
</feature>
<feature type="topological domain" description="Cytoplasmic" evidence="2">
    <location>
        <begin position="90"/>
        <end position="105"/>
    </location>
</feature>
<feature type="transmembrane region" description="Helical" evidence="2">
    <location>
        <begin position="106"/>
        <end position="126"/>
    </location>
</feature>
<feature type="topological domain" description="Extracellular" evidence="2">
    <location>
        <begin position="127"/>
        <end position="161"/>
    </location>
</feature>
<feature type="transmembrane region" description="Helical" evidence="2">
    <location>
        <begin position="162"/>
        <end position="182"/>
    </location>
</feature>
<feature type="topological domain" description="Cytoplasmic" evidence="2">
    <location>
        <begin position="183"/>
        <end position="215"/>
    </location>
</feature>
<feature type="region of interest" description="Disordered" evidence="3">
    <location>
        <begin position="187"/>
        <end position="215"/>
    </location>
</feature>
<feature type="compositionally biased region" description="Low complexity" evidence="3">
    <location>
        <begin position="195"/>
        <end position="205"/>
    </location>
</feature>
<proteinExistence type="evidence at transcript level"/>
<reference key="1">
    <citation type="journal article" date="2009" name="Nature">
        <title>The Sorghum bicolor genome and the diversification of grasses.</title>
        <authorList>
            <person name="Paterson A.H."/>
            <person name="Bowers J.E."/>
            <person name="Bruggmann R."/>
            <person name="Dubchak I."/>
            <person name="Grimwood J."/>
            <person name="Gundlach H."/>
            <person name="Haberer G."/>
            <person name="Hellsten U."/>
            <person name="Mitros T."/>
            <person name="Poliakov A."/>
            <person name="Schmutz J."/>
            <person name="Spannagl M."/>
            <person name="Tang H."/>
            <person name="Wang X."/>
            <person name="Wicker T."/>
            <person name="Bharti A.K."/>
            <person name="Chapman J."/>
            <person name="Feltus F.A."/>
            <person name="Gowik U."/>
            <person name="Grigoriev I.V."/>
            <person name="Lyons E."/>
            <person name="Maher C.A."/>
            <person name="Martis M."/>
            <person name="Narechania A."/>
            <person name="Otillar R.P."/>
            <person name="Penning B.W."/>
            <person name="Salamov A.A."/>
            <person name="Wang Y."/>
            <person name="Zhang L."/>
            <person name="Carpita N.C."/>
            <person name="Freeling M."/>
            <person name="Gingle A.R."/>
            <person name="Hash C.T."/>
            <person name="Keller B."/>
            <person name="Klein P."/>
            <person name="Kresovich S."/>
            <person name="McCann M.C."/>
            <person name="Ming R."/>
            <person name="Peterson D.G."/>
            <person name="Mehboob-ur-Rahman M."/>
            <person name="Ware D."/>
            <person name="Westhoff P."/>
            <person name="Mayer K.F.X."/>
            <person name="Messing J."/>
            <person name="Rokhsar D.S."/>
        </authorList>
    </citation>
    <scope>NUCLEOTIDE SEQUENCE [LARGE SCALE GENOMIC DNA]</scope>
    <source>
        <strain>cv. BTx623</strain>
    </source>
</reference>
<reference key="2">
    <citation type="journal article" date="2018" name="Plant J.">
        <title>The Sorghum bicolor reference genome: improved assembly, gene annotations, a transcriptome atlas, and signatures of genome organization.</title>
        <authorList>
            <person name="McCormick R.F."/>
            <person name="Truong S.K."/>
            <person name="Sreedasyam A."/>
            <person name="Jenkins J."/>
            <person name="Shu S."/>
            <person name="Sims D."/>
            <person name="Kennedy M."/>
            <person name="Amirebrahimi M."/>
            <person name="Weers B.D."/>
            <person name="McKinley B."/>
            <person name="Mattison A."/>
            <person name="Morishige D.T."/>
            <person name="Grimwood J."/>
            <person name="Schmutz J."/>
            <person name="Mullet J.E."/>
        </authorList>
    </citation>
    <scope>GENOME REANNOTATION</scope>
    <source>
        <strain>cv. BTx623</strain>
    </source>
</reference>
<reference key="3">
    <citation type="journal article" date="2014" name="Plant Physiol.">
        <title>Functional and evolutionary analysis of the CASPARIAN STRIP MEMBRANE DOMAIN PROTEIN family.</title>
        <authorList>
            <person name="Roppolo D."/>
            <person name="Boeckmann B."/>
            <person name="Pfister A."/>
            <person name="Boutet E."/>
            <person name="Rubio M.C."/>
            <person name="Denervaud-Tendon V."/>
            <person name="Vermeer J.E."/>
            <person name="Gheyselinck J."/>
            <person name="Xenarios I."/>
            <person name="Geldner N."/>
        </authorList>
    </citation>
    <scope>GENE FAMILY</scope>
    <scope>NOMENCLATURE</scope>
</reference>
<accession>C5Y7C7</accession>
<comment type="subunit">
    <text evidence="1">Homodimer and heterodimers.</text>
</comment>
<comment type="subcellular location">
    <subcellularLocation>
        <location evidence="1">Cell membrane</location>
        <topology evidence="1">Multi-pass membrane protein</topology>
    </subcellularLocation>
</comment>
<comment type="similarity">
    <text evidence="4">Belongs to the Casparian strip membrane proteins (CASP) family.</text>
</comment>
<dbReference type="EMBL" id="CM000764">
    <property type="protein sequence ID" value="EES10193.1"/>
    <property type="molecule type" value="Genomic_DNA"/>
</dbReference>
<dbReference type="RefSeq" id="XP_002451205.1">
    <property type="nucleotide sequence ID" value="XM_002451160.1"/>
</dbReference>
<dbReference type="FunCoup" id="C5Y7C7">
    <property type="interactions" value="821"/>
</dbReference>
<dbReference type="EnsemblPlants" id="EES10193">
    <property type="protein sequence ID" value="EES10193"/>
    <property type="gene ID" value="SORBI_3005G202300"/>
</dbReference>
<dbReference type="Gramene" id="EES10193">
    <property type="protein sequence ID" value="EES10193"/>
    <property type="gene ID" value="SORBI_3005G202300"/>
</dbReference>
<dbReference type="KEGG" id="sbi:8082049"/>
<dbReference type="eggNOG" id="ENOG502R5WE">
    <property type="taxonomic scope" value="Eukaryota"/>
</dbReference>
<dbReference type="HOGENOM" id="CLU_117400_0_0_1"/>
<dbReference type="InParanoid" id="C5Y7C7"/>
<dbReference type="OMA" id="CSQVHIA"/>
<dbReference type="OrthoDB" id="690767at2759"/>
<dbReference type="Proteomes" id="UP000000768">
    <property type="component" value="Chromosome 5"/>
</dbReference>
<dbReference type="GO" id="GO:0005886">
    <property type="term" value="C:plasma membrane"/>
    <property type="evidence" value="ECO:0007669"/>
    <property type="project" value="UniProtKB-SubCell"/>
</dbReference>
<dbReference type="InterPro" id="IPR006702">
    <property type="entry name" value="CASP_dom"/>
</dbReference>
<dbReference type="InterPro" id="IPR044173">
    <property type="entry name" value="CASPL"/>
</dbReference>
<dbReference type="PANTHER" id="PTHR36488">
    <property type="entry name" value="CASP-LIKE PROTEIN 1U1"/>
    <property type="match status" value="1"/>
</dbReference>
<dbReference type="PANTHER" id="PTHR36488:SF7">
    <property type="entry name" value="CASP-LIKE PROTEIN 1U3"/>
    <property type="match status" value="1"/>
</dbReference>
<dbReference type="Pfam" id="PF04535">
    <property type="entry name" value="CASP_dom"/>
    <property type="match status" value="1"/>
</dbReference>
<gene>
    <name type="ordered locus">Sb05g025800</name>
</gene>
<name>CSPLE_SORBI</name>
<keyword id="KW-1003">Cell membrane</keyword>
<keyword id="KW-0472">Membrane</keyword>
<keyword id="KW-1185">Reference proteome</keyword>
<keyword id="KW-0812">Transmembrane</keyword>
<keyword id="KW-1133">Transmembrane helix</keyword>
<evidence type="ECO:0000250" key="1"/>
<evidence type="ECO:0000255" key="2"/>
<evidence type="ECO:0000256" key="3">
    <source>
        <dbReference type="SAM" id="MobiDB-lite"/>
    </source>
</evidence>
<evidence type="ECO:0000305" key="4"/>
<sequence>MHDEEKKEPKWVTAVSIAGRIAGMGLAVAAAVLMSTASQCTVYYAAPAASAYGGAARARTVTYSDFPPFVFLVGAASIAAFLEAIAIFLVVWKKGKDKTTKVLMPLLGVAVPALLYSATGAAFAAVSDMSYCSANGKRVSICAGSAAAGGGVSGGTNFCSQVHIAVYLSLAAAVAVSVAEVVRGLGGSASGGGSDSDSSSSSESGGCDHGCHHKH</sequence>
<protein>
    <recommendedName>
        <fullName>CASP-like protein 1U3</fullName>
        <shortName>SbCASPL1U3</shortName>
    </recommendedName>
</protein>
<organism>
    <name type="scientific">Sorghum bicolor</name>
    <name type="common">Sorghum</name>
    <name type="synonym">Sorghum vulgare</name>
    <dbReference type="NCBI Taxonomy" id="4558"/>
    <lineage>
        <taxon>Eukaryota</taxon>
        <taxon>Viridiplantae</taxon>
        <taxon>Streptophyta</taxon>
        <taxon>Embryophyta</taxon>
        <taxon>Tracheophyta</taxon>
        <taxon>Spermatophyta</taxon>
        <taxon>Magnoliopsida</taxon>
        <taxon>Liliopsida</taxon>
        <taxon>Poales</taxon>
        <taxon>Poaceae</taxon>
        <taxon>PACMAD clade</taxon>
        <taxon>Panicoideae</taxon>
        <taxon>Andropogonodae</taxon>
        <taxon>Andropogoneae</taxon>
        <taxon>Sorghinae</taxon>
        <taxon>Sorghum</taxon>
    </lineage>
</organism>